<keyword id="KW-0004">4Fe-4S</keyword>
<keyword id="KW-0067">ATP-binding</keyword>
<keyword id="KW-0963">Cytoplasm</keyword>
<keyword id="KW-0408">Iron</keyword>
<keyword id="KW-0411">Iron-sulfur</keyword>
<keyword id="KW-0460">Magnesium</keyword>
<keyword id="KW-0479">Metal-binding</keyword>
<keyword id="KW-0547">Nucleotide-binding</keyword>
<keyword id="KW-1185">Reference proteome</keyword>
<keyword id="KW-0694">RNA-binding</keyword>
<keyword id="KW-0808">Transferase</keyword>
<keyword id="KW-0819">tRNA processing</keyword>
<keyword id="KW-0820">tRNA-binding</keyword>
<organism>
    <name type="scientific">Paraburkholderia xenovorans (strain LB400)</name>
    <dbReference type="NCBI Taxonomy" id="266265"/>
    <lineage>
        <taxon>Bacteria</taxon>
        <taxon>Pseudomonadati</taxon>
        <taxon>Pseudomonadota</taxon>
        <taxon>Betaproteobacteria</taxon>
        <taxon>Burkholderiales</taxon>
        <taxon>Burkholderiaceae</taxon>
        <taxon>Paraburkholderia</taxon>
    </lineage>
</organism>
<gene>
    <name evidence="1" type="primary">ttcA</name>
    <name type="ordered locus">Bxeno_A4187</name>
    <name type="ORF">Bxe_A0206</name>
</gene>
<protein>
    <recommendedName>
        <fullName evidence="1">tRNA-cytidine(32) 2-sulfurtransferase</fullName>
        <ecNumber evidence="1">2.8.1.-</ecNumber>
    </recommendedName>
    <alternativeName>
        <fullName evidence="1">Two-thiocytidine biosynthesis protein A</fullName>
    </alternativeName>
    <alternativeName>
        <fullName evidence="1">tRNA 2-thiocytidine biosynthesis protein TtcA</fullName>
    </alternativeName>
</protein>
<dbReference type="EC" id="2.8.1.-" evidence="1"/>
<dbReference type="EMBL" id="CP000270">
    <property type="protein sequence ID" value="ABE32725.1"/>
    <property type="molecule type" value="Genomic_DNA"/>
</dbReference>
<dbReference type="RefSeq" id="WP_011490151.1">
    <property type="nucleotide sequence ID" value="NC_007951.1"/>
</dbReference>
<dbReference type="SMR" id="Q13T64"/>
<dbReference type="STRING" id="266265.Bxe_A0206"/>
<dbReference type="KEGG" id="bxb:DR64_2379"/>
<dbReference type="KEGG" id="bxe:Bxe_A0206"/>
<dbReference type="PATRIC" id="fig|266265.5.peg.4404"/>
<dbReference type="eggNOG" id="COG0037">
    <property type="taxonomic scope" value="Bacteria"/>
</dbReference>
<dbReference type="OrthoDB" id="9801054at2"/>
<dbReference type="Proteomes" id="UP000001817">
    <property type="component" value="Chromosome 1"/>
</dbReference>
<dbReference type="GO" id="GO:0005737">
    <property type="term" value="C:cytoplasm"/>
    <property type="evidence" value="ECO:0007669"/>
    <property type="project" value="UniProtKB-SubCell"/>
</dbReference>
<dbReference type="GO" id="GO:0051539">
    <property type="term" value="F:4 iron, 4 sulfur cluster binding"/>
    <property type="evidence" value="ECO:0007669"/>
    <property type="project" value="UniProtKB-UniRule"/>
</dbReference>
<dbReference type="GO" id="GO:0005524">
    <property type="term" value="F:ATP binding"/>
    <property type="evidence" value="ECO:0007669"/>
    <property type="project" value="UniProtKB-UniRule"/>
</dbReference>
<dbReference type="GO" id="GO:0000287">
    <property type="term" value="F:magnesium ion binding"/>
    <property type="evidence" value="ECO:0007669"/>
    <property type="project" value="UniProtKB-UniRule"/>
</dbReference>
<dbReference type="GO" id="GO:0016783">
    <property type="term" value="F:sulfurtransferase activity"/>
    <property type="evidence" value="ECO:0007669"/>
    <property type="project" value="UniProtKB-UniRule"/>
</dbReference>
<dbReference type="GO" id="GO:0000049">
    <property type="term" value="F:tRNA binding"/>
    <property type="evidence" value="ECO:0007669"/>
    <property type="project" value="UniProtKB-KW"/>
</dbReference>
<dbReference type="GO" id="GO:0034227">
    <property type="term" value="P:tRNA thio-modification"/>
    <property type="evidence" value="ECO:0007669"/>
    <property type="project" value="UniProtKB-UniRule"/>
</dbReference>
<dbReference type="CDD" id="cd24138">
    <property type="entry name" value="TtcA-like"/>
    <property type="match status" value="1"/>
</dbReference>
<dbReference type="Gene3D" id="3.40.50.620">
    <property type="entry name" value="HUPs"/>
    <property type="match status" value="1"/>
</dbReference>
<dbReference type="HAMAP" id="MF_01850">
    <property type="entry name" value="TtcA"/>
    <property type="match status" value="1"/>
</dbReference>
<dbReference type="InterPro" id="IPR014729">
    <property type="entry name" value="Rossmann-like_a/b/a_fold"/>
</dbReference>
<dbReference type="InterPro" id="IPR011063">
    <property type="entry name" value="TilS/TtcA_N"/>
</dbReference>
<dbReference type="InterPro" id="IPR012089">
    <property type="entry name" value="tRNA_Cyd_32_2_STrfase"/>
</dbReference>
<dbReference type="NCBIfam" id="NF007972">
    <property type="entry name" value="PRK10696.1"/>
    <property type="match status" value="1"/>
</dbReference>
<dbReference type="PANTHER" id="PTHR43686:SF1">
    <property type="entry name" value="AMINOTRAN_5 DOMAIN-CONTAINING PROTEIN"/>
    <property type="match status" value="1"/>
</dbReference>
<dbReference type="PANTHER" id="PTHR43686">
    <property type="entry name" value="SULFURTRANSFERASE-RELATED"/>
    <property type="match status" value="1"/>
</dbReference>
<dbReference type="Pfam" id="PF01171">
    <property type="entry name" value="ATP_bind_3"/>
    <property type="match status" value="1"/>
</dbReference>
<dbReference type="SUPFAM" id="SSF52402">
    <property type="entry name" value="Adenine nucleotide alpha hydrolases-like"/>
    <property type="match status" value="1"/>
</dbReference>
<sequence length="336" mass="37418">MNAPEILNGATAAAPAGTGEATPVHARARSPLTRREQKEAYENNKLFKRLARQVGEAIVDFNMIEDGDKVMVCLSGGKDSYAMLEILMRLRERAPINFDIVAVNLDQKQPGFPEHVLPEYLKQLDIPFHIENQDTYSIVKRLVPEGKTTCSLCSRLRRGILYRVAGELGATKIALGHHRDDILQTLLLNMFYGGKLKGMPPKLQSDDGKNIVIRPLAYVKETDLEKYAELREFPIIPCNLCGSQPNLKRAEMKALVRDWEKRFPGRIENMFNALANVVPSHLMDHKLFPFAGLRATGEADPQGDIAFDEEPCSTDSGNSTTLDGAKSIAIVQFDDL</sequence>
<evidence type="ECO:0000255" key="1">
    <source>
        <dbReference type="HAMAP-Rule" id="MF_01850"/>
    </source>
</evidence>
<evidence type="ECO:0000256" key="2">
    <source>
        <dbReference type="SAM" id="MobiDB-lite"/>
    </source>
</evidence>
<name>TTCA_PARXL</name>
<feature type="chain" id="PRO_0000348698" description="tRNA-cytidine(32) 2-sulfurtransferase">
    <location>
        <begin position="1"/>
        <end position="336"/>
    </location>
</feature>
<feature type="region of interest" description="Disordered" evidence="2">
    <location>
        <begin position="11"/>
        <end position="31"/>
    </location>
</feature>
<feature type="short sequence motif" description="PP-loop motif" evidence="1">
    <location>
        <begin position="75"/>
        <end position="80"/>
    </location>
</feature>
<feature type="compositionally biased region" description="Low complexity" evidence="2">
    <location>
        <begin position="11"/>
        <end position="23"/>
    </location>
</feature>
<feature type="binding site" evidence="1">
    <location>
        <position position="150"/>
    </location>
    <ligand>
        <name>[4Fe-4S] cluster</name>
        <dbReference type="ChEBI" id="CHEBI:49883"/>
    </ligand>
</feature>
<feature type="binding site" evidence="1">
    <location>
        <position position="153"/>
    </location>
    <ligand>
        <name>[4Fe-4S] cluster</name>
        <dbReference type="ChEBI" id="CHEBI:49883"/>
    </ligand>
</feature>
<feature type="binding site" evidence="1">
    <location>
        <position position="241"/>
    </location>
    <ligand>
        <name>[4Fe-4S] cluster</name>
        <dbReference type="ChEBI" id="CHEBI:49883"/>
    </ligand>
</feature>
<accession>Q13T64</accession>
<reference key="1">
    <citation type="journal article" date="2006" name="Proc. Natl. Acad. Sci. U.S.A.">
        <title>Burkholderia xenovorans LB400 harbors a multi-replicon, 9.73-Mbp genome shaped for versatility.</title>
        <authorList>
            <person name="Chain P.S.G."/>
            <person name="Denef V.J."/>
            <person name="Konstantinidis K.T."/>
            <person name="Vergez L.M."/>
            <person name="Agullo L."/>
            <person name="Reyes V.L."/>
            <person name="Hauser L."/>
            <person name="Cordova M."/>
            <person name="Gomez L."/>
            <person name="Gonzalez M."/>
            <person name="Land M."/>
            <person name="Lao V."/>
            <person name="Larimer F."/>
            <person name="LiPuma J.J."/>
            <person name="Mahenthiralingam E."/>
            <person name="Malfatti S.A."/>
            <person name="Marx C.J."/>
            <person name="Parnell J.J."/>
            <person name="Ramette A."/>
            <person name="Richardson P."/>
            <person name="Seeger M."/>
            <person name="Smith D."/>
            <person name="Spilker T."/>
            <person name="Sul W.J."/>
            <person name="Tsoi T.V."/>
            <person name="Ulrich L.E."/>
            <person name="Zhulin I.B."/>
            <person name="Tiedje J.M."/>
        </authorList>
    </citation>
    <scope>NUCLEOTIDE SEQUENCE [LARGE SCALE GENOMIC DNA]</scope>
    <source>
        <strain>LB400</strain>
    </source>
</reference>
<proteinExistence type="inferred from homology"/>
<comment type="function">
    <text evidence="1">Catalyzes the ATP-dependent 2-thiolation of cytidine in position 32 of tRNA, to form 2-thiocytidine (s(2)C32). The sulfur atoms are provided by the cysteine/cysteine desulfurase (IscS) system.</text>
</comment>
<comment type="catalytic activity">
    <reaction evidence="1">
        <text>cytidine(32) in tRNA + S-sulfanyl-L-cysteinyl-[cysteine desulfurase] + AH2 + ATP = 2-thiocytidine(32) in tRNA + L-cysteinyl-[cysteine desulfurase] + A + AMP + diphosphate + H(+)</text>
        <dbReference type="Rhea" id="RHEA:57048"/>
        <dbReference type="Rhea" id="RHEA-COMP:10288"/>
        <dbReference type="Rhea" id="RHEA-COMP:12157"/>
        <dbReference type="Rhea" id="RHEA-COMP:12158"/>
        <dbReference type="Rhea" id="RHEA-COMP:14821"/>
        <dbReference type="ChEBI" id="CHEBI:13193"/>
        <dbReference type="ChEBI" id="CHEBI:15378"/>
        <dbReference type="ChEBI" id="CHEBI:17499"/>
        <dbReference type="ChEBI" id="CHEBI:29950"/>
        <dbReference type="ChEBI" id="CHEBI:30616"/>
        <dbReference type="ChEBI" id="CHEBI:33019"/>
        <dbReference type="ChEBI" id="CHEBI:61963"/>
        <dbReference type="ChEBI" id="CHEBI:82748"/>
        <dbReference type="ChEBI" id="CHEBI:141453"/>
        <dbReference type="ChEBI" id="CHEBI:456215"/>
    </reaction>
    <physiologicalReaction direction="left-to-right" evidence="1">
        <dbReference type="Rhea" id="RHEA:57049"/>
    </physiologicalReaction>
</comment>
<comment type="cofactor">
    <cofactor evidence="1">
        <name>Mg(2+)</name>
        <dbReference type="ChEBI" id="CHEBI:18420"/>
    </cofactor>
</comment>
<comment type="cofactor">
    <cofactor evidence="1">
        <name>[4Fe-4S] cluster</name>
        <dbReference type="ChEBI" id="CHEBI:49883"/>
    </cofactor>
    <text evidence="1">Binds 1 [4Fe-4S] cluster per subunit. The cluster is chelated by three Cys residues, the fourth Fe has a free coordination site that may bind a sulfur atom transferred from the persulfide of IscS.</text>
</comment>
<comment type="pathway">
    <text evidence="1">tRNA modification.</text>
</comment>
<comment type="subunit">
    <text evidence="1">Homodimer.</text>
</comment>
<comment type="subcellular location">
    <subcellularLocation>
        <location evidence="1">Cytoplasm</location>
    </subcellularLocation>
</comment>
<comment type="miscellaneous">
    <text evidence="1">The thiolation reaction likely consists of two steps: a first activation step by ATP to form an adenylated intermediate of the target base of tRNA, and a second nucleophilic substitution step of the sulfur (S) atom supplied by the hydrosulfide attached to the Fe-S cluster.</text>
</comment>
<comment type="similarity">
    <text evidence="1">Belongs to the TtcA family.</text>
</comment>